<organism>
    <name type="scientific">Bombyx mori</name>
    <name type="common">Silk moth</name>
    <dbReference type="NCBI Taxonomy" id="7091"/>
    <lineage>
        <taxon>Eukaryota</taxon>
        <taxon>Metazoa</taxon>
        <taxon>Ecdysozoa</taxon>
        <taxon>Arthropoda</taxon>
        <taxon>Hexapoda</taxon>
        <taxon>Insecta</taxon>
        <taxon>Pterygota</taxon>
        <taxon>Neoptera</taxon>
        <taxon>Endopterygota</taxon>
        <taxon>Lepidoptera</taxon>
        <taxon>Glossata</taxon>
        <taxon>Ditrysia</taxon>
        <taxon>Bombycoidea</taxon>
        <taxon>Bombycidae</taxon>
        <taxon>Bombycinae</taxon>
        <taxon>Bombyx</taxon>
    </lineage>
</organism>
<name>PROF_BOMMO</name>
<feature type="chain" id="PRO_0000199588" description="Profilin">
    <location>
        <begin position="1"/>
        <end position="126"/>
    </location>
</feature>
<evidence type="ECO:0000250" key="1"/>
<evidence type="ECO:0000305" key="2"/>
<dbReference type="EMBL" id="AY690617">
    <property type="protein sequence ID" value="AAT99314.1"/>
    <property type="molecule type" value="mRNA"/>
</dbReference>
<dbReference type="RefSeq" id="NP_001037108.1">
    <property type="nucleotide sequence ID" value="NM_001043643.1"/>
</dbReference>
<dbReference type="RefSeq" id="XP_062533066.1">
    <property type="nucleotide sequence ID" value="XM_062677082.1"/>
</dbReference>
<dbReference type="SMR" id="Q68HB4"/>
<dbReference type="FunCoup" id="Q68HB4">
    <property type="interactions" value="297"/>
</dbReference>
<dbReference type="STRING" id="7091.Q68HB4"/>
<dbReference type="PaxDb" id="7091-BGIBMGA002981-TA"/>
<dbReference type="EnsemblMetazoa" id="NM_001043643.1">
    <property type="protein sequence ID" value="NP_001037108.1"/>
    <property type="gene ID" value="GeneID_692652"/>
</dbReference>
<dbReference type="GeneID" id="692652"/>
<dbReference type="KEGG" id="bmor:692652"/>
<dbReference type="CTD" id="692652"/>
<dbReference type="eggNOG" id="KOG1755">
    <property type="taxonomic scope" value="Eukaryota"/>
</dbReference>
<dbReference type="HOGENOM" id="CLU_120772_0_1_1"/>
<dbReference type="InParanoid" id="Q68HB4"/>
<dbReference type="OMA" id="HHAENVQ"/>
<dbReference type="OrthoDB" id="239359at7088"/>
<dbReference type="Proteomes" id="UP000005204">
    <property type="component" value="Unassembled WGS sequence"/>
</dbReference>
<dbReference type="GO" id="GO:0005938">
    <property type="term" value="C:cell cortex"/>
    <property type="evidence" value="ECO:0007669"/>
    <property type="project" value="TreeGrafter"/>
</dbReference>
<dbReference type="GO" id="GO:0005856">
    <property type="term" value="C:cytoskeleton"/>
    <property type="evidence" value="ECO:0007669"/>
    <property type="project" value="UniProtKB-SubCell"/>
</dbReference>
<dbReference type="GO" id="GO:0003785">
    <property type="term" value="F:actin monomer binding"/>
    <property type="evidence" value="ECO:0007669"/>
    <property type="project" value="TreeGrafter"/>
</dbReference>
<dbReference type="GO" id="GO:0051128">
    <property type="term" value="P:regulation of cellular component organization"/>
    <property type="evidence" value="ECO:0007669"/>
    <property type="project" value="UniProtKB-ARBA"/>
</dbReference>
<dbReference type="CDD" id="cd00148">
    <property type="entry name" value="PROF"/>
    <property type="match status" value="1"/>
</dbReference>
<dbReference type="FunFam" id="3.30.450.30:FF:000001">
    <property type="entry name" value="Profilin"/>
    <property type="match status" value="1"/>
</dbReference>
<dbReference type="Gene3D" id="3.30.450.30">
    <property type="entry name" value="Dynein light chain 2a, cytoplasmic"/>
    <property type="match status" value="1"/>
</dbReference>
<dbReference type="InterPro" id="IPR048278">
    <property type="entry name" value="PFN"/>
</dbReference>
<dbReference type="InterPro" id="IPR005455">
    <property type="entry name" value="PFN_euk"/>
</dbReference>
<dbReference type="InterPro" id="IPR036140">
    <property type="entry name" value="PFN_sf"/>
</dbReference>
<dbReference type="InterPro" id="IPR027310">
    <property type="entry name" value="Profilin_CS"/>
</dbReference>
<dbReference type="PANTHER" id="PTHR11604">
    <property type="entry name" value="PROFILIN"/>
    <property type="match status" value="1"/>
</dbReference>
<dbReference type="PANTHER" id="PTHR11604:SF0">
    <property type="entry name" value="PROFILIN"/>
    <property type="match status" value="1"/>
</dbReference>
<dbReference type="Pfam" id="PF00235">
    <property type="entry name" value="Profilin"/>
    <property type="match status" value="1"/>
</dbReference>
<dbReference type="PRINTS" id="PR00392">
    <property type="entry name" value="PROFILIN"/>
</dbReference>
<dbReference type="PRINTS" id="PR01640">
    <property type="entry name" value="PROFILINPLNT"/>
</dbReference>
<dbReference type="SMART" id="SM00392">
    <property type="entry name" value="PROF"/>
    <property type="match status" value="1"/>
</dbReference>
<dbReference type="SUPFAM" id="SSF55770">
    <property type="entry name" value="Profilin (actin-binding protein)"/>
    <property type="match status" value="1"/>
</dbReference>
<dbReference type="PROSITE" id="PS00414">
    <property type="entry name" value="PROFILIN"/>
    <property type="match status" value="1"/>
</dbReference>
<comment type="function">
    <text evidence="1">Binds to actin and affects the structure of the cytoskeleton. At high concentrations, profilin prevents the polymerization of actin, whereas it enhances it at low concentrations. By binding to PIP2, it inhibits the formation of IP3 and DG (By similarity).</text>
</comment>
<comment type="subunit">
    <text evidence="1">Occurs in many kinds of cells as a complex with monomeric actin in a 1:1 ratio.</text>
</comment>
<comment type="subcellular location">
    <subcellularLocation>
        <location evidence="1">Cytoplasm</location>
        <location evidence="1">Cytoskeleton</location>
    </subcellularLocation>
</comment>
<comment type="similarity">
    <text evidence="2">Belongs to the profilin family.</text>
</comment>
<sequence length="126" mass="13713">MSWQDYVDKQLMASRCVTKAAIAGHDGNVWAKSEGFEISKDEVAKIVAGFENESLLTSGGVTIAGTRYIYLSGTDHIIRAKLGKVGVHCMKTQQAVVISLYEEPIQPQQAASVVEKLGEYLITCGY</sequence>
<proteinExistence type="evidence at transcript level"/>
<reference key="1">
    <citation type="submission" date="2004-07" db="EMBL/GenBank/DDBJ databases">
        <title>Molecular cloning of a profilin cDNA from Bombyx mori.</title>
        <authorList>
            <person name="Wei Y."/>
            <person name="Choi Y."/>
            <person name="Jin B."/>
        </authorList>
    </citation>
    <scope>NUCLEOTIDE SEQUENCE [MRNA]</scope>
</reference>
<accession>Q68HB4</accession>
<keyword id="KW-0009">Actin-binding</keyword>
<keyword id="KW-0963">Cytoplasm</keyword>
<keyword id="KW-0206">Cytoskeleton</keyword>
<keyword id="KW-1185">Reference proteome</keyword>
<protein>
    <recommendedName>
        <fullName>Profilin</fullName>
    </recommendedName>
</protein>